<dbReference type="EC" id="1.17.7.3" evidence="1"/>
<dbReference type="EMBL" id="AP009484">
    <property type="protein sequence ID" value="BAH17909.1"/>
    <property type="molecule type" value="Genomic_DNA"/>
</dbReference>
<dbReference type="SMR" id="B9E6U1"/>
<dbReference type="STRING" id="458233.MCCL_1202"/>
<dbReference type="KEGG" id="mcl:MCCL_1202"/>
<dbReference type="eggNOG" id="COG0821">
    <property type="taxonomic scope" value="Bacteria"/>
</dbReference>
<dbReference type="HOGENOM" id="CLU_042258_0_0_9"/>
<dbReference type="OrthoDB" id="9803214at2"/>
<dbReference type="UniPathway" id="UPA00056">
    <property type="reaction ID" value="UER00096"/>
</dbReference>
<dbReference type="Proteomes" id="UP000001383">
    <property type="component" value="Chromosome"/>
</dbReference>
<dbReference type="GO" id="GO:0051539">
    <property type="term" value="F:4 iron, 4 sulfur cluster binding"/>
    <property type="evidence" value="ECO:0007669"/>
    <property type="project" value="UniProtKB-UniRule"/>
</dbReference>
<dbReference type="GO" id="GO:0046429">
    <property type="term" value="F:4-hydroxy-3-methylbut-2-en-1-yl diphosphate synthase activity (ferredoxin)"/>
    <property type="evidence" value="ECO:0007669"/>
    <property type="project" value="UniProtKB-UniRule"/>
</dbReference>
<dbReference type="GO" id="GO:0141197">
    <property type="term" value="F:4-hydroxy-3-methylbut-2-enyl-diphosphate synthase activity (flavodoxin)"/>
    <property type="evidence" value="ECO:0007669"/>
    <property type="project" value="UniProtKB-EC"/>
</dbReference>
<dbReference type="GO" id="GO:0005506">
    <property type="term" value="F:iron ion binding"/>
    <property type="evidence" value="ECO:0007669"/>
    <property type="project" value="InterPro"/>
</dbReference>
<dbReference type="GO" id="GO:0019288">
    <property type="term" value="P:isopentenyl diphosphate biosynthetic process, methylerythritol 4-phosphate pathway"/>
    <property type="evidence" value="ECO:0007669"/>
    <property type="project" value="UniProtKB-UniRule"/>
</dbReference>
<dbReference type="GO" id="GO:0016114">
    <property type="term" value="P:terpenoid biosynthetic process"/>
    <property type="evidence" value="ECO:0007669"/>
    <property type="project" value="InterPro"/>
</dbReference>
<dbReference type="FunFam" id="3.20.20.20:FF:000001">
    <property type="entry name" value="4-hydroxy-3-methylbut-2-en-1-yl diphosphate synthase (flavodoxin)"/>
    <property type="match status" value="1"/>
</dbReference>
<dbReference type="FunFam" id="3.30.413.10:FF:000005">
    <property type="entry name" value="4-hydroxy-3-methylbut-2-en-1-yl diphosphate synthase (flavodoxin)"/>
    <property type="match status" value="1"/>
</dbReference>
<dbReference type="Gene3D" id="3.20.20.20">
    <property type="entry name" value="Dihydropteroate synthase-like"/>
    <property type="match status" value="1"/>
</dbReference>
<dbReference type="Gene3D" id="3.30.413.10">
    <property type="entry name" value="Sulfite Reductase Hemoprotein, domain 1"/>
    <property type="match status" value="1"/>
</dbReference>
<dbReference type="HAMAP" id="MF_00159">
    <property type="entry name" value="IspG"/>
    <property type="match status" value="1"/>
</dbReference>
<dbReference type="InterPro" id="IPR011005">
    <property type="entry name" value="Dihydropteroate_synth-like_sf"/>
</dbReference>
<dbReference type="InterPro" id="IPR016425">
    <property type="entry name" value="IspG_bac"/>
</dbReference>
<dbReference type="InterPro" id="IPR004588">
    <property type="entry name" value="IspG_bac-typ"/>
</dbReference>
<dbReference type="InterPro" id="IPR045854">
    <property type="entry name" value="NO2/SO3_Rdtase_4Fe4S_sf"/>
</dbReference>
<dbReference type="NCBIfam" id="TIGR00612">
    <property type="entry name" value="ispG_gcpE"/>
    <property type="match status" value="1"/>
</dbReference>
<dbReference type="NCBIfam" id="NF001540">
    <property type="entry name" value="PRK00366.1"/>
    <property type="match status" value="1"/>
</dbReference>
<dbReference type="PANTHER" id="PTHR30454">
    <property type="entry name" value="4-HYDROXY-3-METHYLBUT-2-EN-1-YL DIPHOSPHATE SYNTHASE"/>
    <property type="match status" value="1"/>
</dbReference>
<dbReference type="PANTHER" id="PTHR30454:SF0">
    <property type="entry name" value="4-HYDROXY-3-METHYLBUT-2-EN-1-YL DIPHOSPHATE SYNTHASE (FERREDOXIN), CHLOROPLASTIC"/>
    <property type="match status" value="1"/>
</dbReference>
<dbReference type="Pfam" id="PF04551">
    <property type="entry name" value="GcpE"/>
    <property type="match status" value="1"/>
</dbReference>
<dbReference type="PIRSF" id="PIRSF004640">
    <property type="entry name" value="IspG"/>
    <property type="match status" value="1"/>
</dbReference>
<dbReference type="SUPFAM" id="SSF51717">
    <property type="entry name" value="Dihydropteroate synthetase-like"/>
    <property type="match status" value="1"/>
</dbReference>
<dbReference type="SUPFAM" id="SSF56014">
    <property type="entry name" value="Nitrite and sulphite reductase 4Fe-4S domain-like"/>
    <property type="match status" value="1"/>
</dbReference>
<evidence type="ECO:0000255" key="1">
    <source>
        <dbReference type="HAMAP-Rule" id="MF_00159"/>
    </source>
</evidence>
<accession>B9E6U1</accession>
<feature type="chain" id="PRO_1000123452" description="4-hydroxy-3-methylbut-2-en-1-yl diphosphate synthase (flavodoxin)">
    <location>
        <begin position="1"/>
        <end position="371"/>
    </location>
</feature>
<feature type="binding site" evidence="1">
    <location>
        <position position="268"/>
    </location>
    <ligand>
        <name>[4Fe-4S] cluster</name>
        <dbReference type="ChEBI" id="CHEBI:49883"/>
    </ligand>
</feature>
<feature type="binding site" evidence="1">
    <location>
        <position position="271"/>
    </location>
    <ligand>
        <name>[4Fe-4S] cluster</name>
        <dbReference type="ChEBI" id="CHEBI:49883"/>
    </ligand>
</feature>
<feature type="binding site" evidence="1">
    <location>
        <position position="303"/>
    </location>
    <ligand>
        <name>[4Fe-4S] cluster</name>
        <dbReference type="ChEBI" id="CHEBI:49883"/>
    </ligand>
</feature>
<feature type="binding site" evidence="1">
    <location>
        <position position="310"/>
    </location>
    <ligand>
        <name>[4Fe-4S] cluster</name>
        <dbReference type="ChEBI" id="CHEBI:49883"/>
    </ligand>
</feature>
<sequence length="371" mass="40001">MPEITHRKNTRPVKVGDLTIGGSNELVIQSMTTTKTHDVEATVAEIKRLEEAGCQIVRVACPKEEDALAIAEIKKQINIPLVVDIHFDYKLALLAIEGGADKIRINPGNIGRREKVEEVVKACKAKGIPIRIGVNAGSLEKHILKKYGYPTADGMVESALHHIKILEDLDFHDIIVSMKASDVNLAIEAYTKAAQAFDYPLHLGITESGTLFAGTVKSAAGLGAIMSLGIGNTLRISLSADPVEEVKVARELLKSFGLASNAATLISCPTCGRIEIDLISIANEVEEYISTIKAPLKVAVLGCAVNGPGEAREADIGIAGARGEGLLFMKGKTVRKVPEETMVEELKMEIDKLAEEYFKKQEAEKLANAEK</sequence>
<comment type="function">
    <text evidence="1">Converts 2C-methyl-D-erythritol 2,4-cyclodiphosphate (ME-2,4cPP) into 1-hydroxy-2-methyl-2-(E)-butenyl 4-diphosphate.</text>
</comment>
<comment type="catalytic activity">
    <reaction evidence="1">
        <text>(2E)-4-hydroxy-3-methylbut-2-enyl diphosphate + oxidized [flavodoxin] + H2O + 2 H(+) = 2-C-methyl-D-erythritol 2,4-cyclic diphosphate + reduced [flavodoxin]</text>
        <dbReference type="Rhea" id="RHEA:43604"/>
        <dbReference type="Rhea" id="RHEA-COMP:10622"/>
        <dbReference type="Rhea" id="RHEA-COMP:10623"/>
        <dbReference type="ChEBI" id="CHEBI:15377"/>
        <dbReference type="ChEBI" id="CHEBI:15378"/>
        <dbReference type="ChEBI" id="CHEBI:57618"/>
        <dbReference type="ChEBI" id="CHEBI:58210"/>
        <dbReference type="ChEBI" id="CHEBI:58483"/>
        <dbReference type="ChEBI" id="CHEBI:128753"/>
        <dbReference type="EC" id="1.17.7.3"/>
    </reaction>
</comment>
<comment type="cofactor">
    <cofactor evidence="1">
        <name>[4Fe-4S] cluster</name>
        <dbReference type="ChEBI" id="CHEBI:49883"/>
    </cofactor>
    <text evidence="1">Binds 1 [4Fe-4S] cluster.</text>
</comment>
<comment type="pathway">
    <text evidence="1">Isoprenoid biosynthesis; isopentenyl diphosphate biosynthesis via DXP pathway; isopentenyl diphosphate from 1-deoxy-D-xylulose 5-phosphate: step 5/6.</text>
</comment>
<comment type="similarity">
    <text evidence="1">Belongs to the IspG family.</text>
</comment>
<keyword id="KW-0004">4Fe-4S</keyword>
<keyword id="KW-0408">Iron</keyword>
<keyword id="KW-0411">Iron-sulfur</keyword>
<keyword id="KW-0414">Isoprene biosynthesis</keyword>
<keyword id="KW-0479">Metal-binding</keyword>
<keyword id="KW-0560">Oxidoreductase</keyword>
<keyword id="KW-1185">Reference proteome</keyword>
<name>ISPG_MACCJ</name>
<gene>
    <name evidence="1" type="primary">ispG</name>
    <name type="ordered locus">MCCL_1202</name>
</gene>
<protein>
    <recommendedName>
        <fullName evidence="1">4-hydroxy-3-methylbut-2-en-1-yl diphosphate synthase (flavodoxin)</fullName>
        <ecNumber evidence="1">1.17.7.3</ecNumber>
    </recommendedName>
    <alternativeName>
        <fullName evidence="1">1-hydroxy-2-methyl-2-(E)-butenyl 4-diphosphate synthase</fullName>
    </alternativeName>
</protein>
<organism>
    <name type="scientific">Macrococcus caseolyticus (strain JCSC5402)</name>
    <name type="common">Macrococcoides caseolyticum</name>
    <dbReference type="NCBI Taxonomy" id="458233"/>
    <lineage>
        <taxon>Bacteria</taxon>
        <taxon>Bacillati</taxon>
        <taxon>Bacillota</taxon>
        <taxon>Bacilli</taxon>
        <taxon>Bacillales</taxon>
        <taxon>Staphylococcaceae</taxon>
        <taxon>Macrococcoides</taxon>
    </lineage>
</organism>
<proteinExistence type="inferred from homology"/>
<reference key="1">
    <citation type="journal article" date="2009" name="J. Bacteriol.">
        <title>Complete genome sequence of Macrococcus caseolyticus strain JCSCS5402, reflecting the ancestral genome of the human-pathogenic staphylococci.</title>
        <authorList>
            <person name="Baba T."/>
            <person name="Kuwahara-Arai K."/>
            <person name="Uchiyama I."/>
            <person name="Takeuchi F."/>
            <person name="Ito T."/>
            <person name="Hiramatsu K."/>
        </authorList>
    </citation>
    <scope>NUCLEOTIDE SEQUENCE [LARGE SCALE GENOMIC DNA]</scope>
    <source>
        <strain>JCSC5402</strain>
    </source>
</reference>